<proteinExistence type="inferred from homology"/>
<gene>
    <name type="primary">ftsK</name>
    <name type="ordered locus">blr0616</name>
</gene>
<reference key="1">
    <citation type="journal article" date="2002" name="DNA Res.">
        <title>Complete genomic sequence of nitrogen-fixing symbiotic bacterium Bradyrhizobium japonicum USDA110.</title>
        <authorList>
            <person name="Kaneko T."/>
            <person name="Nakamura Y."/>
            <person name="Sato S."/>
            <person name="Minamisawa K."/>
            <person name="Uchiumi T."/>
            <person name="Sasamoto S."/>
            <person name="Watanabe A."/>
            <person name="Idesawa K."/>
            <person name="Iriguchi M."/>
            <person name="Kawashima K."/>
            <person name="Kohara M."/>
            <person name="Matsumoto M."/>
            <person name="Shimpo S."/>
            <person name="Tsuruoka H."/>
            <person name="Wada T."/>
            <person name="Yamada M."/>
            <person name="Tabata S."/>
        </authorList>
    </citation>
    <scope>NUCLEOTIDE SEQUENCE [LARGE SCALE GENOMIC DNA]</scope>
    <source>
        <strain>JCM 10833 / BCRC 13528 / IAM 13628 / NBRC 14792 / USDA 110</strain>
    </source>
</reference>
<dbReference type="EMBL" id="BA000040">
    <property type="protein sequence ID" value="BAC45881.1"/>
    <property type="molecule type" value="Genomic_DNA"/>
</dbReference>
<dbReference type="RefSeq" id="NP_767256.1">
    <property type="nucleotide sequence ID" value="NC_004463.1"/>
</dbReference>
<dbReference type="RefSeq" id="WP_011083444.1">
    <property type="nucleotide sequence ID" value="NC_004463.1"/>
</dbReference>
<dbReference type="SMR" id="Q89WR2"/>
<dbReference type="STRING" id="224911.AAV28_42355"/>
<dbReference type="EnsemblBacteria" id="BAC45881">
    <property type="protein sequence ID" value="BAC45881"/>
    <property type="gene ID" value="BAC45881"/>
</dbReference>
<dbReference type="GeneID" id="46495761"/>
<dbReference type="KEGG" id="bja:blr0616"/>
<dbReference type="PATRIC" id="fig|224911.44.peg.9156"/>
<dbReference type="eggNOG" id="COG1674">
    <property type="taxonomic scope" value="Bacteria"/>
</dbReference>
<dbReference type="HOGENOM" id="CLU_001981_6_1_5"/>
<dbReference type="InParanoid" id="Q89WR2"/>
<dbReference type="OrthoDB" id="9807790at2"/>
<dbReference type="PhylomeDB" id="Q89WR2"/>
<dbReference type="Proteomes" id="UP000002526">
    <property type="component" value="Chromosome"/>
</dbReference>
<dbReference type="GO" id="GO:0005886">
    <property type="term" value="C:plasma membrane"/>
    <property type="evidence" value="ECO:0007669"/>
    <property type="project" value="UniProtKB-SubCell"/>
</dbReference>
<dbReference type="GO" id="GO:0005524">
    <property type="term" value="F:ATP binding"/>
    <property type="evidence" value="ECO:0007669"/>
    <property type="project" value="UniProtKB-KW"/>
</dbReference>
<dbReference type="GO" id="GO:0016887">
    <property type="term" value="F:ATP hydrolysis activity"/>
    <property type="evidence" value="ECO:0007669"/>
    <property type="project" value="InterPro"/>
</dbReference>
<dbReference type="GO" id="GO:0003677">
    <property type="term" value="F:DNA binding"/>
    <property type="evidence" value="ECO:0007669"/>
    <property type="project" value="UniProtKB-KW"/>
</dbReference>
<dbReference type="GO" id="GO:0015616">
    <property type="term" value="F:DNA translocase activity"/>
    <property type="evidence" value="ECO:0000318"/>
    <property type="project" value="GO_Central"/>
</dbReference>
<dbReference type="GO" id="GO:0051301">
    <property type="term" value="P:cell division"/>
    <property type="evidence" value="ECO:0007669"/>
    <property type="project" value="UniProtKB-KW"/>
</dbReference>
<dbReference type="GO" id="GO:0007059">
    <property type="term" value="P:chromosome segregation"/>
    <property type="evidence" value="ECO:0007669"/>
    <property type="project" value="UniProtKB-KW"/>
</dbReference>
<dbReference type="CDD" id="cd01127">
    <property type="entry name" value="TrwB_TraG_TraD_VirD4"/>
    <property type="match status" value="1"/>
</dbReference>
<dbReference type="Gene3D" id="3.30.980.40">
    <property type="match status" value="1"/>
</dbReference>
<dbReference type="Gene3D" id="3.40.50.300">
    <property type="entry name" value="P-loop containing nucleotide triphosphate hydrolases"/>
    <property type="match status" value="1"/>
</dbReference>
<dbReference type="Gene3D" id="1.10.10.10">
    <property type="entry name" value="Winged helix-like DNA-binding domain superfamily/Winged helix DNA-binding domain"/>
    <property type="match status" value="1"/>
</dbReference>
<dbReference type="InterPro" id="IPR003593">
    <property type="entry name" value="AAA+_ATPase"/>
</dbReference>
<dbReference type="InterPro" id="IPR050206">
    <property type="entry name" value="FtsK/SpoIIIE/SftA"/>
</dbReference>
<dbReference type="InterPro" id="IPR025199">
    <property type="entry name" value="FtsK_4TM"/>
</dbReference>
<dbReference type="InterPro" id="IPR041027">
    <property type="entry name" value="FtsK_alpha"/>
</dbReference>
<dbReference type="InterPro" id="IPR002543">
    <property type="entry name" value="FtsK_dom"/>
</dbReference>
<dbReference type="InterPro" id="IPR018541">
    <property type="entry name" value="Ftsk_gamma"/>
</dbReference>
<dbReference type="InterPro" id="IPR027417">
    <property type="entry name" value="P-loop_NTPase"/>
</dbReference>
<dbReference type="InterPro" id="IPR036388">
    <property type="entry name" value="WH-like_DNA-bd_sf"/>
</dbReference>
<dbReference type="InterPro" id="IPR036390">
    <property type="entry name" value="WH_DNA-bd_sf"/>
</dbReference>
<dbReference type="PANTHER" id="PTHR22683:SF41">
    <property type="entry name" value="DNA TRANSLOCASE FTSK"/>
    <property type="match status" value="1"/>
</dbReference>
<dbReference type="PANTHER" id="PTHR22683">
    <property type="entry name" value="SPORULATION PROTEIN RELATED"/>
    <property type="match status" value="1"/>
</dbReference>
<dbReference type="Pfam" id="PF13491">
    <property type="entry name" value="FtsK_4TM"/>
    <property type="match status" value="1"/>
</dbReference>
<dbReference type="Pfam" id="PF17854">
    <property type="entry name" value="FtsK_alpha"/>
    <property type="match status" value="1"/>
</dbReference>
<dbReference type="Pfam" id="PF09397">
    <property type="entry name" value="FtsK_gamma"/>
    <property type="match status" value="1"/>
</dbReference>
<dbReference type="Pfam" id="PF01580">
    <property type="entry name" value="FtsK_SpoIIIE"/>
    <property type="match status" value="1"/>
</dbReference>
<dbReference type="SMART" id="SM00382">
    <property type="entry name" value="AAA"/>
    <property type="match status" value="1"/>
</dbReference>
<dbReference type="SMART" id="SM00843">
    <property type="entry name" value="Ftsk_gamma"/>
    <property type="match status" value="1"/>
</dbReference>
<dbReference type="SUPFAM" id="SSF52540">
    <property type="entry name" value="P-loop containing nucleoside triphosphate hydrolases"/>
    <property type="match status" value="1"/>
</dbReference>
<dbReference type="SUPFAM" id="SSF46785">
    <property type="entry name" value="Winged helix' DNA-binding domain"/>
    <property type="match status" value="1"/>
</dbReference>
<dbReference type="PROSITE" id="PS50901">
    <property type="entry name" value="FTSK"/>
    <property type="match status" value="1"/>
</dbReference>
<protein>
    <recommendedName>
        <fullName>DNA translocase FtsK</fullName>
    </recommendedName>
</protein>
<evidence type="ECO:0000250" key="1"/>
<evidence type="ECO:0000255" key="2"/>
<evidence type="ECO:0000255" key="3">
    <source>
        <dbReference type="PROSITE-ProRule" id="PRU00289"/>
    </source>
</evidence>
<evidence type="ECO:0000256" key="4">
    <source>
        <dbReference type="SAM" id="MobiDB-lite"/>
    </source>
</evidence>
<evidence type="ECO:0000305" key="5"/>
<feature type="chain" id="PRO_0000098242" description="DNA translocase FtsK">
    <location>
        <begin position="1"/>
        <end position="825"/>
    </location>
</feature>
<feature type="transmembrane region" description="Helical" evidence="2">
    <location>
        <begin position="32"/>
        <end position="52"/>
    </location>
</feature>
<feature type="transmembrane region" description="Helical" evidence="2">
    <location>
        <begin position="79"/>
        <end position="99"/>
    </location>
</feature>
<feature type="transmembrane region" description="Helical" evidence="2">
    <location>
        <begin position="118"/>
        <end position="138"/>
    </location>
</feature>
<feature type="transmembrane region" description="Helical" evidence="2">
    <location>
        <begin position="146"/>
        <end position="166"/>
    </location>
</feature>
<feature type="transmembrane region" description="Helical" evidence="2">
    <location>
        <begin position="170"/>
        <end position="190"/>
    </location>
</feature>
<feature type="topological domain" description="Cytoplasmic" evidence="2">
    <location>
        <begin position="191"/>
        <end position="825"/>
    </location>
</feature>
<feature type="domain" description="FtsK" evidence="3">
    <location>
        <begin position="457"/>
        <end position="676"/>
    </location>
</feature>
<feature type="region of interest" description="Disordered" evidence="4">
    <location>
        <begin position="254"/>
        <end position="318"/>
    </location>
</feature>
<feature type="compositionally biased region" description="Acidic residues" evidence="4">
    <location>
        <begin position="279"/>
        <end position="298"/>
    </location>
</feature>
<feature type="binding site" evidence="3">
    <location>
        <begin position="477"/>
        <end position="482"/>
    </location>
    <ligand>
        <name>ATP</name>
        <dbReference type="ChEBI" id="CHEBI:30616"/>
    </ligand>
</feature>
<sequence length="825" mass="89035">MSMSAIERVIPLVGHLPPSIREGLARRMRELAGLGLIALSGLASAALMTWSVQDASLSHATSRPIRNILGYAGAIGADLAMQILGLGAIMLVLTVAVWGWRMMTHRPFDREALRLGSWILCTVIAAGFVSCWPHGGAWPLPTGLGGVVGDALVRAPAVIFGPPGMIYRTVLGVILFAAMAATFLIACGLGAREHDDELAEIEDDDKPLDEDEESDRGSVSLGWLFHALMSTKARLIWLCGAAYRSLVSSGPKTRAVGFSRQEPNLGGGRAAPPISPRSEDEDYEEEHEEEEDEEEEEEPAARAPRKKAAPKAAAKKSSDKFELPSVSVLAAPKAGDRQPLSKAELEANSRALEGVLQDFGVRGEIVKANPGPVVTLYELEPAPGIKSSRVIGLADDIARSMSALSARVAVVPGRNAIGIELPNAHREKVYLRELLVAKETVDTVAKLPLCLGKTIGGDPVIIDLARTPHMLIAGTTGSGKSVAINTMILSLVYRLRPDQCRLIMVDPKMLELSVYDGIPHLLTPVVTDPKKAVVALKWAVREMEERYKNMAKLGVRNIDGYNTRLLELKAKGEEPTRTVHTGFDKETGKAIYEEEKLSLDPLPYIVIIVDEMADLMMVAGKDIEGAVQRLAQMARAAGLHVILATQRPSVDVITGTIKANFPTRIAFQVTSKIDSRTILGEMGAEQLLGQGDMLYMAGGGRISRVHGPFASDDEVEKVVRHLKTQGQPEYLEAVTAEEPTEDEDGGAVFDASGMGADGGGDLFQQAVAIVKRDRKASTSYIQRRLQIGYNRAASLMERMELEGIVGPANHAGKREILVEEEDSHM</sequence>
<organism>
    <name type="scientific">Bradyrhizobium diazoefficiens (strain JCM 10833 / BCRC 13528 / IAM 13628 / NBRC 14792 / USDA 110)</name>
    <dbReference type="NCBI Taxonomy" id="224911"/>
    <lineage>
        <taxon>Bacteria</taxon>
        <taxon>Pseudomonadati</taxon>
        <taxon>Pseudomonadota</taxon>
        <taxon>Alphaproteobacteria</taxon>
        <taxon>Hyphomicrobiales</taxon>
        <taxon>Nitrobacteraceae</taxon>
        <taxon>Bradyrhizobium</taxon>
    </lineage>
</organism>
<keyword id="KW-0067">ATP-binding</keyword>
<keyword id="KW-0131">Cell cycle</keyword>
<keyword id="KW-0132">Cell division</keyword>
<keyword id="KW-0997">Cell inner membrane</keyword>
<keyword id="KW-1003">Cell membrane</keyword>
<keyword id="KW-0159">Chromosome partition</keyword>
<keyword id="KW-0238">DNA-binding</keyword>
<keyword id="KW-0472">Membrane</keyword>
<keyword id="KW-0547">Nucleotide-binding</keyword>
<keyword id="KW-1185">Reference proteome</keyword>
<keyword id="KW-0812">Transmembrane</keyword>
<keyword id="KW-1133">Transmembrane helix</keyword>
<name>FTSK_BRADU</name>
<accession>Q89WR2</accession>
<comment type="function">
    <text evidence="1">Essential cell division protein that coordinates cell division and chromosome segregation. The N-terminus is involved in assembly of the cell-division machinery. The C-terminus functions as a DNA motor that moves dsDNA in an ATP-dependent manner towards the dif recombination site, which is located within the replication terminus region. Translocation stops specifically at Xer-dif sites, where FtsK interacts with the Xer recombinase, allowing activation of chromosome unlinking by recombination. FtsK orienting polar sequences (KOPS) guide the direction of DNA translocation. FtsK can remove proteins from DNA as it translocates, but translocation stops specifically at XerCD-dif site, thereby preventing removal of XerC and XerD from dif (By similarity).</text>
</comment>
<comment type="subunit">
    <text evidence="1">Homohexamer. Forms a ring that surrounds DNA (By similarity).</text>
</comment>
<comment type="subcellular location">
    <subcellularLocation>
        <location evidence="1">Cell inner membrane</location>
        <topology evidence="1">Multi-pass membrane protein</topology>
    </subcellularLocation>
    <text evidence="1">Located at the septum.</text>
</comment>
<comment type="domain">
    <text evidence="1">Consists of an N-terminal domain, which is sufficient for the localization to the septal ring and is required for cell division, followed by a linker domain, and a C-terminal domain, which forms the translocation motor involved in chromosome segregation. The C-terminal domain can be further subdivided into alpha, beta and gamma subdomains. The alpha and beta subdomains multimerise to produce a hexameric ring, contain the nucleotide binding motif and form the DNA pump. The gamma subdomain is a regulatory subdomain that controls translocation of DNA by recognition of KOPS motifs and interacts with XerD recombinase (By similarity).</text>
</comment>
<comment type="similarity">
    <text evidence="5">Belongs to the FtsK/SpoIIIE/SftA family.</text>
</comment>